<evidence type="ECO:0000255" key="1">
    <source>
        <dbReference type="HAMAP-Rule" id="MF_04002"/>
    </source>
</evidence>
<sequence length="501" mass="56460">MAFWQPSQRLYLPPTPVTKVLCSEQYIRRKDVFYHGETERMLTVGHPYYEIKQSGSGKTIPKVSPNQYRVFRILLPDPNQFALPDKAMYDPSKERLVWAVVGVQVSRGQPLGGSVSGHSYQNTLIDAENVSKKVNAQGTDDRKQGGMDVKQQQILLLGCTPAIGEYWTTARPCVTDRPETGSCPPIELKNKPIEDGDMMDIGFGAANFKELNATKSDLPLDIAKDICLYPDYLKMTEEAAGNSMFFFARKEQVYVRHIWSRGGTDKEMPPEAYFLKPKGGDQTQKMPSILFGVPSGSLVSTDGQLFNRPYWLFRAQGMNNGICWLNQLFVTVGDNTRGTTLTITVPTSGSPLTEYDTSKFNVFQRHVEEYKLAFVFQLCSVTLSPETVSHLQGLMPSILEHWDINMQPPTSSILEDTYRYLESPATKCADNVTPMGPEDPYAGLKFWEVNLKERLSLDLDQFPLGRRFLAQQGLGCSTRKRVAPVPKVTEKRIVRKRRKGN</sequence>
<accession>P11326</accession>
<reference key="1">
    <citation type="submission" date="1987-08" db="EMBL/GenBank/DDBJ databases">
        <authorList>
            <person name="Eriksson A."/>
        </authorList>
    </citation>
    <scope>NUCLEOTIDE SEQUENCE [GENOMIC DNA]</scope>
</reference>
<protein>
    <recommendedName>
        <fullName evidence="1">Major capsid protein L1</fullName>
    </recommendedName>
</protein>
<proteinExistence type="inferred from homology"/>
<name>VL1_PAPVE</name>
<feature type="chain" id="PRO_0000133558" description="Major capsid protein L1">
    <location>
        <begin position="1"/>
        <end position="501"/>
    </location>
</feature>
<feature type="disulfide bond" description="Interchain (with C-428)" evidence="1">
    <location>
        <position position="173"/>
    </location>
</feature>
<feature type="disulfide bond" description="Interchain (with C-173)" evidence="1">
    <location>
        <position position="428"/>
    </location>
</feature>
<organismHost>
    <name type="scientific">Cervus elaphus</name>
    <name type="common">Red deer</name>
    <dbReference type="NCBI Taxonomy" id="9860"/>
</organismHost>
<organismHost>
    <name type="scientific">Rangifer tarandus</name>
    <name type="common">Reindeer</name>
    <name type="synonym">Cervus tarandus</name>
    <dbReference type="NCBI Taxonomy" id="9870"/>
</organismHost>
<keyword id="KW-0167">Capsid protein</keyword>
<keyword id="KW-1015">Disulfide bond</keyword>
<keyword id="KW-1048">Host nucleus</keyword>
<keyword id="KW-0945">Host-virus interaction</keyword>
<keyword id="KW-0426">Late protein</keyword>
<keyword id="KW-1185">Reference proteome</keyword>
<keyword id="KW-1145">T=7 icosahedral capsid protein</keyword>
<keyword id="KW-1161">Viral attachment to host cell</keyword>
<keyword id="KW-1162">Viral penetration into host cytoplasm</keyword>
<keyword id="KW-0946">Virion</keyword>
<keyword id="KW-1164">Virus endocytosis by host</keyword>
<keyword id="KW-1160">Virus entry into host cell</keyword>
<organism>
    <name type="scientific">European elk papillomavirus</name>
    <name type="common">EEPV</name>
    <dbReference type="NCBI Taxonomy" id="2885846"/>
    <lineage>
        <taxon>Viruses</taxon>
        <taxon>Monodnaviria</taxon>
        <taxon>Shotokuvirae</taxon>
        <taxon>Cossaviricota</taxon>
        <taxon>Papovaviricetes</taxon>
        <taxon>Zurhausenvirales</taxon>
        <taxon>Papillomaviridae</taxon>
        <taxon>Firstpapillomavirinae</taxon>
        <taxon>Deltapapillomavirus</taxon>
        <taxon>Deltapapillomavirus 1</taxon>
    </lineage>
</organism>
<comment type="function">
    <text evidence="1">Forms an icosahedral capsid with a T=7 symmetry and a 50 nm diameter. The capsid is composed of 72 pentamers linked to each other by disulfide bonds and associated with L2 proteins. Binds to heparan sulfate proteoglycans on cell surface of basal layer keratinocytes to provide initial virion attachment. This binding mediates a conformational change in the virus capsid that facilitates efficient infection. The virion enters the host cell via endocytosis. During virus trafficking, L1 protein dissociates from the viral DNA and the genomic DNA is released to the host nucleus. The virion assembly takes place within the cell nucleus. Encapsulates the genomic DNA together with protein L2.</text>
</comment>
<comment type="subunit">
    <text evidence="1">Self-assembles into homopentamers. The capsid has an icosahedral symmetry and consists of 72 capsomers, with each capsomer being a pentamer of L1. Interacts with the minor capsid protein L2; this interaction is necessary for viral genome encapsidation. Interacts with protein E2; this interaction enhances E2-dependent replication and transcription activation.</text>
</comment>
<comment type="subcellular location">
    <subcellularLocation>
        <location evidence="1">Virion</location>
    </subcellularLocation>
    <subcellularLocation>
        <location evidence="1">Host nucleus</location>
    </subcellularLocation>
</comment>
<comment type="similarity">
    <text evidence="1">Belongs to the papillomaviridae L1 protein family.</text>
</comment>
<gene>
    <name evidence="1" type="primary">L1</name>
</gene>
<dbReference type="EMBL" id="M15953">
    <property type="protein sequence ID" value="AAA66861.1"/>
    <property type="molecule type" value="Genomic_DNA"/>
</dbReference>
<dbReference type="PIR" id="A94457">
    <property type="entry name" value="P1WLEP"/>
</dbReference>
<dbReference type="RefSeq" id="NP_041313.1">
    <property type="nucleotide sequence ID" value="NC_001524.1"/>
</dbReference>
<dbReference type="SMR" id="P11326"/>
<dbReference type="GeneID" id="1488995"/>
<dbReference type="KEGG" id="vg:1488995"/>
<dbReference type="Proteomes" id="UP000009060">
    <property type="component" value="Genome"/>
</dbReference>
<dbReference type="GO" id="GO:0042025">
    <property type="term" value="C:host cell nucleus"/>
    <property type="evidence" value="ECO:0007669"/>
    <property type="project" value="UniProtKB-SubCell"/>
</dbReference>
<dbReference type="GO" id="GO:0039620">
    <property type="term" value="C:T=7 icosahedral viral capsid"/>
    <property type="evidence" value="ECO:0007669"/>
    <property type="project" value="UniProtKB-UniRule"/>
</dbReference>
<dbReference type="GO" id="GO:0005198">
    <property type="term" value="F:structural molecule activity"/>
    <property type="evidence" value="ECO:0007669"/>
    <property type="project" value="UniProtKB-UniRule"/>
</dbReference>
<dbReference type="GO" id="GO:0075509">
    <property type="term" value="P:endocytosis involved in viral entry into host cell"/>
    <property type="evidence" value="ECO:0007669"/>
    <property type="project" value="UniProtKB-KW"/>
</dbReference>
<dbReference type="GO" id="GO:0019062">
    <property type="term" value="P:virion attachment to host cell"/>
    <property type="evidence" value="ECO:0007669"/>
    <property type="project" value="UniProtKB-UniRule"/>
</dbReference>
<dbReference type="Gene3D" id="2.60.175.20">
    <property type="entry name" value="Major capsid L1 (late) superfamily, Papillomavirus"/>
    <property type="match status" value="1"/>
</dbReference>
<dbReference type="HAMAP" id="MF_04002">
    <property type="entry name" value="PPV_L1"/>
    <property type="match status" value="1"/>
</dbReference>
<dbReference type="InterPro" id="IPR002210">
    <property type="entry name" value="Capsid_L1_Papillomavir"/>
</dbReference>
<dbReference type="InterPro" id="IPR036973">
    <property type="entry name" value="Capsid_L1_sf_Papillomavir"/>
</dbReference>
<dbReference type="InterPro" id="IPR011222">
    <property type="entry name" value="dsDNA_vir_gr_I_capsid"/>
</dbReference>
<dbReference type="Pfam" id="PF00500">
    <property type="entry name" value="Late_protein_L1"/>
    <property type="match status" value="1"/>
</dbReference>
<dbReference type="PRINTS" id="PR00865">
    <property type="entry name" value="HPVCAPSIDL1"/>
</dbReference>
<dbReference type="SUPFAM" id="SSF88648">
    <property type="entry name" value="Group I dsDNA viruses"/>
    <property type="match status" value="1"/>
</dbReference>